<gene>
    <name type="primary">U17/U16</name>
</gene>
<name>U17_HHV6U</name>
<reference key="1">
    <citation type="journal article" date="1994" name="J. Virol.">
        <title>Nucleotide sequence analysis of a 38.5-kilobase-pair region of the genome of human herpesvirus 6 encoding human cytomegalovirus immediate-early gene homologs and transactivating functions.</title>
        <authorList>
            <person name="Nicholas J."/>
            <person name="Martin M.E.D."/>
        </authorList>
    </citation>
    <scope>NUCLEOTIDE SEQUENCE [GENOMIC DNA]</scope>
    <scope>ALTERNATIVE SPLICING (ISOFORMS 1 AND 3)</scope>
</reference>
<reference key="2">
    <citation type="journal article" date="1995" name="Virology">
        <title>The DNA sequence of human herpesvirus-6: structure, coding content, and genome evolution.</title>
        <authorList>
            <person name="Gompels U.A."/>
            <person name="Nicholas J."/>
            <person name="Lawrence G.L."/>
            <person name="Jones M."/>
            <person name="Thomson B.J."/>
            <person name="Martin M.E.D."/>
            <person name="Efstathiou S."/>
            <person name="Craxton M.A."/>
            <person name="Macaulay H.A."/>
        </authorList>
    </citation>
    <scope>NUCLEOTIDE SEQUENCE [LARGE SCALE GENOMIC DNA]</scope>
</reference>
<reference key="3">
    <citation type="journal article" date="2000" name="J. Virol.">
        <title>Characterization of transcripts expressed from human herpesvirus 6A strain GS immediate-early region B U16-U17 open reading frames.</title>
        <authorList>
            <person name="Flebbe-Rehwaldt L.M."/>
            <person name="Wood C."/>
            <person name="Chandran B."/>
        </authorList>
    </citation>
    <scope>ALTERNATIVE SPLICING</scope>
</reference>
<comment type="subcellular location">
    <subcellularLocation>
        <location evidence="2">Membrane</location>
        <topology evidence="2">Single-pass membrane protein</topology>
    </subcellularLocation>
</comment>
<comment type="alternative products">
    <event type="alternative splicing"/>
    <isoform>
        <id>Q69552-1</id>
        <name>2</name>
        <name>Protein U17</name>
        <name>EFLF1</name>
        <sequence type="displayed"/>
    </isoform>
    <isoform>
        <id>Q69551-1</id>
        <name>1</name>
        <name>Protein U17/U16</name>
        <name>Protein U16exon1-2</name>
        <sequence type="external"/>
    </isoform>
    <isoform>
        <id>Q69551-2</id>
        <name>3</name>
        <name>Protein U16</name>
        <name>EFLF2</name>
        <sequence type="external"/>
    </isoform>
</comment>
<comment type="sequence caution" evidence="2">
    <conflict type="erroneous initiation">
        <sequence resource="EMBL-CDS" id="AAA16722"/>
    </conflict>
</comment>
<keyword id="KW-0025">Alternative splicing</keyword>
<keyword id="KW-0472">Membrane</keyword>
<keyword id="KW-1185">Reference proteome</keyword>
<keyword id="KW-0812">Transmembrane</keyword>
<keyword id="KW-1133">Transmembrane helix</keyword>
<organismHost>
    <name type="scientific">Homo sapiens</name>
    <name type="common">Human</name>
    <dbReference type="NCBI Taxonomy" id="9606"/>
</organismHost>
<feature type="chain" id="PRO_0000343648" description="Protein U17">
    <location>
        <begin position="1"/>
        <end position="133"/>
    </location>
</feature>
<feature type="transmembrane region" description="Helical" evidence="1">
    <location>
        <begin position="82"/>
        <end position="102"/>
    </location>
</feature>
<evidence type="ECO:0000255" key="1"/>
<evidence type="ECO:0000305" key="2"/>
<dbReference type="EMBL" id="L25528">
    <property type="protein sequence ID" value="AAA16722.1"/>
    <property type="status" value="ALT_INIT"/>
    <property type="molecule type" value="Genomic_DNA"/>
</dbReference>
<dbReference type="EMBL" id="X83413">
    <property type="status" value="NOT_ANNOTATED_CDS"/>
    <property type="molecule type" value="Genomic_DNA"/>
</dbReference>
<dbReference type="PIR" id="T09309">
    <property type="entry name" value="T09309"/>
</dbReference>
<dbReference type="DNASU" id="1487923"/>
<dbReference type="Proteomes" id="UP000009295">
    <property type="component" value="Segment"/>
</dbReference>
<dbReference type="GO" id="GO:0016020">
    <property type="term" value="C:membrane"/>
    <property type="evidence" value="ECO:0007669"/>
    <property type="project" value="UniProtKB-SubCell"/>
</dbReference>
<accession>Q69552</accession>
<accession>Q69039</accession>
<organism>
    <name type="scientific">Human herpesvirus 6A (strain Uganda-1102)</name>
    <name type="common">HHV-6 variant A</name>
    <name type="synonym">Human B lymphotropic virus</name>
    <dbReference type="NCBI Taxonomy" id="10370"/>
    <lineage>
        <taxon>Viruses</taxon>
        <taxon>Duplodnaviria</taxon>
        <taxon>Heunggongvirae</taxon>
        <taxon>Peploviricota</taxon>
        <taxon>Herviviricetes</taxon>
        <taxon>Herpesvirales</taxon>
        <taxon>Orthoherpesviridae</taxon>
        <taxon>Betaherpesvirinae</taxon>
        <taxon>Roseolovirus</taxon>
        <taxon>Roseolovirus humanbeta6a</taxon>
        <taxon>Human betaherpesvirus 6A</taxon>
    </lineage>
</organism>
<proteinExistence type="predicted"/>
<protein>
    <recommendedName>
        <fullName>Protein U17</fullName>
    </recommendedName>
</protein>
<sequence>MADERTSDSVKTRYDIALMKLNDIKIAVFRDSLSTYVEQKTGLTIQFNWPKSRCLVISTLCKIPFPTKSAAELQEMCKYQCFVSVLWCVILVFVVKIKLFFLLNKVRYYFAARKDCNYLDMFLSGERRLVMCA</sequence>